<sequence length="292" mass="31092">MASITTTTNFFESIPRPTKTYRSASYDRISTRHGFNGTGKTVLITGGSSGIGLSIAKAFAGAGVARIAILSRSRATQLTAKAEIEAAYPSTSILLFEASVTDADRFASVLEELAGVHVLVLCAAAVHARVPLAELSGKDVQHVFDTNSVSTVNLARLYTATPGKDKTILHVSSAVAQMYAPLRSVYGASKAAAVQAMQHLAREHQGTGDRVRVFSFHPGAITTPASGAIYTPGAVQWDDADLPAHFSLWLAGPESDFLNGRYVWANWDVDELVALKERLACDGRFLTIGLVL</sequence>
<organism>
    <name type="scientific">Claviceps purpurea (strain 20.1)</name>
    <name type="common">Ergot fungus</name>
    <name type="synonym">Sphacelia segetum</name>
    <dbReference type="NCBI Taxonomy" id="1111077"/>
    <lineage>
        <taxon>Eukaryota</taxon>
        <taxon>Fungi</taxon>
        <taxon>Dikarya</taxon>
        <taxon>Ascomycota</taxon>
        <taxon>Pezizomycotina</taxon>
        <taxon>Sordariomycetes</taxon>
        <taxon>Hypocreomycetidae</taxon>
        <taxon>Hypocreales</taxon>
        <taxon>Clavicipitaceae</taxon>
        <taxon>Claviceps</taxon>
    </lineage>
</organism>
<keyword id="KW-0521">NADP</keyword>
<keyword id="KW-0560">Oxidoreductase</keyword>
<keyword id="KW-1185">Reference proteome</keyword>
<name>PIG17_CLAP2</name>
<comment type="function">
    <text evidence="3 4 5 6 9">Short chain dehydrogenase/reductase; part of the ergochrome gene cluster responsible for the typical purple-black color of the ergot sclerotia (Probable). The ergochrome gene cluster produces several ergot pigments including the yellow ergochrome secalonic acid and its derivatives, as well as the red anthraquinones endocrocin and clavorubin (PubMed:28955461). The pathway begins with the synthesis of atrochrysone thioester by the polyketide synthase (PKS) CPUR_05437 (By similarity). The atrochrysone carboxyl ACP thioesterase CPUR_05436 then breaks the thioester bond and releases the atrochrysone carboxylic acid from CPUR_05437 (By similarity). The atrochrysone carboxylic acid is then converted to atrochrysone which is further transformed into emodin anthrone (By similarity). The next step is performed by the anthrone oxygenase CPUR_05434 that catalyzes the oxidation of emodinanthrone to emodin (By similarity). Emodin is further modified to yield monodictyphenone via several steps involving CPUR_05427, CPUR_05428, CPUR_05429 and CPUR_05430 (By similarity). The short chain dehydrogenase/reductase CPUR_05418 then catalyzes the C-5 ketoreduction to give the xanthone skeleton of the monomeric units (PubMed:32105084). Ergochromes formation requires further dimerization steps of different xanthone units, probably catalyzed by the cytochrome P450 monooxygenase CPUR_05419 (PubMed:28955461). CPUR_05425, CPUR_05426 and CPUR_05431 are unique to Claviceps, thus it is likely that they are involved in further modification of xanthone units or in their dimerization (PubMed:28955461). The yellow ergochromes and the red anthraquinone pigments endocrocin and clavorubin are products from the same PKS derived precursors and the latter are likely shunt products in the pathway of xanthone biosynthesis (PubMed:28955461). It is proposed that atrochrysone carboxylic acid released from the PKS CPUR_05437 can also be converted to endocrocin anthrone which is further oxidized into endocrocin by CPUR_05435 (By similarity). Endocrocin could be then modified to clavorubin, possibly by CPUR_05423 and CPUR_05431 (PubMed:28955461). Clavorubin is the principal anthraquinone metabolite produced by the cluster with a much higher yield compared to endocrocin (PubMed:28955461).</text>
</comment>
<comment type="pathway">
    <text evidence="6">Secondary metabolite biosynthesis.</text>
</comment>
<comment type="similarity">
    <text evidence="8">Belongs to the short-chain dehydrogenases/reductases (SDR) family.</text>
</comment>
<gene>
    <name type="ORF">CPUR_05418</name>
</gene>
<evidence type="ECO:0000250" key="1">
    <source>
        <dbReference type="UniProtKB" id="L0E2Z4"/>
    </source>
</evidence>
<evidence type="ECO:0000250" key="2">
    <source>
        <dbReference type="UniProtKB" id="O93868"/>
    </source>
</evidence>
<evidence type="ECO:0000250" key="3">
    <source>
        <dbReference type="UniProtKB" id="Q4W944"/>
    </source>
</evidence>
<evidence type="ECO:0000250" key="4">
    <source>
        <dbReference type="UniProtKB" id="Q5BH30"/>
    </source>
</evidence>
<evidence type="ECO:0000269" key="5">
    <source>
    </source>
</evidence>
<evidence type="ECO:0000269" key="6">
    <source>
    </source>
</evidence>
<evidence type="ECO:0000303" key="7">
    <source>
    </source>
</evidence>
<evidence type="ECO:0000305" key="8"/>
<evidence type="ECO:0000305" key="9">
    <source>
    </source>
</evidence>
<feature type="chain" id="PRO_0000453454" description="Short chain dehydrogenase/reductase CPUR_05418">
    <location>
        <begin position="1"/>
        <end position="292"/>
    </location>
</feature>
<feature type="active site" description="Proton donor" evidence="2">
    <location>
        <position position="172"/>
    </location>
</feature>
<feature type="active site" description="Proton donor" evidence="2">
    <location>
        <position position="186"/>
    </location>
</feature>
<feature type="active site" description="Lowers pKa of active site Tyr" evidence="2">
    <location>
        <position position="190"/>
    </location>
</feature>
<feature type="binding site" evidence="1">
    <location>
        <position position="44"/>
    </location>
    <ligand>
        <name>NADP(+)</name>
        <dbReference type="ChEBI" id="CHEBI:58349"/>
    </ligand>
</feature>
<feature type="binding site" evidence="1">
    <location>
        <position position="156"/>
    </location>
    <ligand>
        <name>NADP(+)</name>
        <dbReference type="ChEBI" id="CHEBI:58349"/>
    </ligand>
</feature>
<feature type="binding site" evidence="2">
    <location>
        <position position="186"/>
    </location>
    <ligand>
        <name>NADP(+)</name>
        <dbReference type="ChEBI" id="CHEBI:58349"/>
    </ligand>
</feature>
<feature type="binding site" evidence="2">
    <location>
        <position position="190"/>
    </location>
    <ligand>
        <name>NADP(+)</name>
        <dbReference type="ChEBI" id="CHEBI:58349"/>
    </ligand>
</feature>
<feature type="binding site" evidence="2">
    <location>
        <position position="221"/>
    </location>
    <ligand>
        <name>NADP(+)</name>
        <dbReference type="ChEBI" id="CHEBI:58349"/>
    </ligand>
</feature>
<feature type="binding site" evidence="1">
    <location>
        <position position="223"/>
    </location>
    <ligand>
        <name>NADP(+)</name>
        <dbReference type="ChEBI" id="CHEBI:58349"/>
    </ligand>
</feature>
<dbReference type="EC" id="1.1.1.-" evidence="6"/>
<dbReference type="EMBL" id="CAGA01000032">
    <property type="protein sequence ID" value="CCE31565.1"/>
    <property type="molecule type" value="Genomic_DNA"/>
</dbReference>
<dbReference type="SMR" id="M1W848"/>
<dbReference type="STRING" id="1111077.M1W848"/>
<dbReference type="VEuPathDB" id="FungiDB:CPUR_05418"/>
<dbReference type="eggNOG" id="KOG4169">
    <property type="taxonomic scope" value="Eukaryota"/>
</dbReference>
<dbReference type="HOGENOM" id="CLU_010194_8_2_1"/>
<dbReference type="OrthoDB" id="1933717at2759"/>
<dbReference type="Proteomes" id="UP000016801">
    <property type="component" value="Unassembled WGS sequence"/>
</dbReference>
<dbReference type="GO" id="GO:0016491">
    <property type="term" value="F:oxidoreductase activity"/>
    <property type="evidence" value="ECO:0007669"/>
    <property type="project" value="UniProtKB-KW"/>
</dbReference>
<dbReference type="CDD" id="cd05233">
    <property type="entry name" value="SDR_c"/>
    <property type="match status" value="1"/>
</dbReference>
<dbReference type="Gene3D" id="3.40.50.720">
    <property type="entry name" value="NAD(P)-binding Rossmann-like Domain"/>
    <property type="match status" value="1"/>
</dbReference>
<dbReference type="InterPro" id="IPR036291">
    <property type="entry name" value="NAD(P)-bd_dom_sf"/>
</dbReference>
<dbReference type="InterPro" id="IPR002347">
    <property type="entry name" value="SDR_fam"/>
</dbReference>
<dbReference type="PANTHER" id="PTHR42901">
    <property type="entry name" value="ALCOHOL DEHYDROGENASE"/>
    <property type="match status" value="1"/>
</dbReference>
<dbReference type="PANTHER" id="PTHR42901:SF1">
    <property type="entry name" value="ALCOHOL DEHYDROGENASE"/>
    <property type="match status" value="1"/>
</dbReference>
<dbReference type="Pfam" id="PF00106">
    <property type="entry name" value="adh_short"/>
    <property type="match status" value="1"/>
</dbReference>
<dbReference type="PRINTS" id="PR00081">
    <property type="entry name" value="GDHRDH"/>
</dbReference>
<dbReference type="SMART" id="SM00822">
    <property type="entry name" value="PKS_KR"/>
    <property type="match status" value="1"/>
</dbReference>
<dbReference type="SUPFAM" id="SSF51735">
    <property type="entry name" value="NAD(P)-binding Rossmann-fold domains"/>
    <property type="match status" value="1"/>
</dbReference>
<reference key="1">
    <citation type="journal article" date="2013" name="PLoS Genet.">
        <title>Plant-symbiotic fungi as chemical engineers: Multi-genome analysis of the Clavicipitaceae reveals dynamics of alkaloid loci.</title>
        <authorList>
            <person name="Schardl C.L."/>
            <person name="Young C.A."/>
            <person name="Hesse U."/>
            <person name="Amyotte S.G."/>
            <person name="Andreeva K."/>
            <person name="Calie P.J."/>
            <person name="Fleetwood D.J."/>
            <person name="Haws D.C."/>
            <person name="Moore N."/>
            <person name="Oeser B."/>
            <person name="Panaccione D.G."/>
            <person name="Schweri K.K."/>
            <person name="Voisey C.R."/>
            <person name="Farman M.L."/>
            <person name="Jaromczyk J.W."/>
            <person name="Roe B.A."/>
            <person name="O'Sullivan D.M."/>
            <person name="Scott B."/>
            <person name="Tudzynski P."/>
            <person name="An Z."/>
            <person name="Arnaoudova E.G."/>
            <person name="Bullock C.T."/>
            <person name="Charlton N.D."/>
            <person name="Chen L."/>
            <person name="Cox M."/>
            <person name="Dinkins R.D."/>
            <person name="Florea S."/>
            <person name="Glenn A.E."/>
            <person name="Gordon A."/>
            <person name="Gueldener U."/>
            <person name="Harris D.R."/>
            <person name="Hollin W."/>
            <person name="Jaromczyk J."/>
            <person name="Johnson R.D."/>
            <person name="Khan A.K."/>
            <person name="Leistner E."/>
            <person name="Leuchtmann A."/>
            <person name="Li C."/>
            <person name="Liu J."/>
            <person name="Liu J."/>
            <person name="Liu M."/>
            <person name="Mace W."/>
            <person name="Machado C."/>
            <person name="Nagabhyru P."/>
            <person name="Pan J."/>
            <person name="Schmid J."/>
            <person name="Sugawara K."/>
            <person name="Steiner U."/>
            <person name="Takach J.E."/>
            <person name="Tanaka E."/>
            <person name="Webb J.S."/>
            <person name="Wilson E.V."/>
            <person name="Wiseman J.L."/>
            <person name="Yoshida R."/>
            <person name="Zeng Z."/>
        </authorList>
    </citation>
    <scope>NUCLEOTIDE SEQUENCE [LARGE SCALE GENOMIC DNA]</scope>
    <source>
        <strain>20.1</strain>
    </source>
</reference>
<reference key="2">
    <citation type="journal article" date="2016" name="Fungal Biol. Biotechnol.">
        <title>Identification and characterization of the ergochrome gene cluster in the plant pathogenic fungus Claviceps purpurea.</title>
        <authorList>
            <person name="Neubauer L."/>
            <person name="Dopstadt J."/>
            <person name="Humpf H.U."/>
            <person name="Tudzynski P."/>
        </authorList>
    </citation>
    <scope>FUNCTION</scope>
</reference>
<reference key="3">
    <citation type="journal article" date="2019" name="Chem. Sci.">
        <title>Structure revision of cryptosporioptides and determination of the genetic basis for dimeric xanthone biosynthesis in fungi.</title>
        <authorList>
            <person name="Greco C."/>
            <person name="de Mattos-Shipley K."/>
            <person name="Bailey A.M."/>
            <person name="Mulholland N.P."/>
            <person name="Vincent J.L."/>
            <person name="Willis C.L."/>
            <person name="Cox R.J."/>
            <person name="Simpson T.J."/>
        </authorList>
    </citation>
    <scope>IDENTIFICATION</scope>
    <scope>FUNCTION</scope>
</reference>
<reference key="4">
    <citation type="journal article" date="2020" name="Org. Lett.">
        <title>Unraveling the fungal strategy for tetrahydroxanthone biosynthesis and diversification.</title>
        <authorList>
            <person name="Wei X."/>
            <person name="Matsuda Y."/>
        </authorList>
    </citation>
    <scope>FUNCTION</scope>
    <scope>CATALYTIC ACTIVITY</scope>
    <scope>PATHWAY</scope>
</reference>
<accession>M1W848</accession>
<protein>
    <recommendedName>
        <fullName evidence="7">Short chain dehydrogenase/reductase CPUR_05418</fullName>
        <shortName evidence="7">SDR CPUR_05418</shortName>
        <ecNumber evidence="6">1.1.1.-</ecNumber>
    </recommendedName>
    <alternativeName>
        <fullName evidence="7">Ergochrome biosynthesis cluster protein CPUR_05418</fullName>
    </alternativeName>
</protein>
<proteinExistence type="evidence at protein level"/>